<gene>
    <name evidence="1" type="primary">rpsF</name>
    <name type="ordered locus">ESA_00200</name>
</gene>
<protein>
    <recommendedName>
        <fullName evidence="1">Small ribosomal subunit protein bS6</fullName>
    </recommendedName>
    <alternativeName>
        <fullName evidence="3">30S ribosomal protein S6</fullName>
    </alternativeName>
</protein>
<reference key="1">
    <citation type="journal article" date="2010" name="PLoS ONE">
        <title>Genome sequence of Cronobacter sakazakii BAA-894 and comparative genomic hybridization analysis with other Cronobacter species.</title>
        <authorList>
            <person name="Kucerova E."/>
            <person name="Clifton S.W."/>
            <person name="Xia X.Q."/>
            <person name="Long F."/>
            <person name="Porwollik S."/>
            <person name="Fulton L."/>
            <person name="Fronick C."/>
            <person name="Minx P."/>
            <person name="Kyung K."/>
            <person name="Warren W."/>
            <person name="Fulton R."/>
            <person name="Feng D."/>
            <person name="Wollam A."/>
            <person name="Shah N."/>
            <person name="Bhonagiri V."/>
            <person name="Nash W.E."/>
            <person name="Hallsworth-Pepin K."/>
            <person name="Wilson R.K."/>
            <person name="McClelland M."/>
            <person name="Forsythe S.J."/>
        </authorList>
    </citation>
    <scope>NUCLEOTIDE SEQUENCE [LARGE SCALE GENOMIC DNA]</scope>
    <source>
        <strain>ATCC BAA-894</strain>
    </source>
</reference>
<organism>
    <name type="scientific">Cronobacter sakazakii (strain ATCC BAA-894)</name>
    <name type="common">Enterobacter sakazakii</name>
    <dbReference type="NCBI Taxonomy" id="290339"/>
    <lineage>
        <taxon>Bacteria</taxon>
        <taxon>Pseudomonadati</taxon>
        <taxon>Pseudomonadota</taxon>
        <taxon>Gammaproteobacteria</taxon>
        <taxon>Enterobacterales</taxon>
        <taxon>Enterobacteriaceae</taxon>
        <taxon>Cronobacter</taxon>
    </lineage>
</organism>
<proteinExistence type="inferred from homology"/>
<dbReference type="EMBL" id="CP000783">
    <property type="protein sequence ID" value="ABU75501.1"/>
    <property type="molecule type" value="Genomic_DNA"/>
</dbReference>
<dbReference type="RefSeq" id="WP_001216673.1">
    <property type="nucleotide sequence ID" value="NC_009778.1"/>
</dbReference>
<dbReference type="SMR" id="A7MM76"/>
<dbReference type="GeneID" id="92804768"/>
<dbReference type="KEGG" id="esa:ESA_00200"/>
<dbReference type="HOGENOM" id="CLU_113441_6_1_6"/>
<dbReference type="Proteomes" id="UP000000260">
    <property type="component" value="Chromosome"/>
</dbReference>
<dbReference type="GO" id="GO:0022627">
    <property type="term" value="C:cytosolic small ribosomal subunit"/>
    <property type="evidence" value="ECO:0007669"/>
    <property type="project" value="TreeGrafter"/>
</dbReference>
<dbReference type="GO" id="GO:0070181">
    <property type="term" value="F:small ribosomal subunit rRNA binding"/>
    <property type="evidence" value="ECO:0007669"/>
    <property type="project" value="TreeGrafter"/>
</dbReference>
<dbReference type="GO" id="GO:0003735">
    <property type="term" value="F:structural constituent of ribosome"/>
    <property type="evidence" value="ECO:0007669"/>
    <property type="project" value="InterPro"/>
</dbReference>
<dbReference type="GO" id="GO:0006412">
    <property type="term" value="P:translation"/>
    <property type="evidence" value="ECO:0007669"/>
    <property type="project" value="UniProtKB-UniRule"/>
</dbReference>
<dbReference type="CDD" id="cd00473">
    <property type="entry name" value="bS6"/>
    <property type="match status" value="1"/>
</dbReference>
<dbReference type="FunFam" id="3.30.70.60:FF:000003">
    <property type="entry name" value="30S ribosomal protein S6"/>
    <property type="match status" value="1"/>
</dbReference>
<dbReference type="Gene3D" id="3.30.70.60">
    <property type="match status" value="1"/>
</dbReference>
<dbReference type="HAMAP" id="MF_00360">
    <property type="entry name" value="Ribosomal_bS6"/>
    <property type="match status" value="1"/>
</dbReference>
<dbReference type="InterPro" id="IPR000529">
    <property type="entry name" value="Ribosomal_bS6"/>
</dbReference>
<dbReference type="InterPro" id="IPR020815">
    <property type="entry name" value="Ribosomal_bS6_CS"/>
</dbReference>
<dbReference type="InterPro" id="IPR035980">
    <property type="entry name" value="Ribosomal_bS6_sf"/>
</dbReference>
<dbReference type="InterPro" id="IPR020814">
    <property type="entry name" value="Ribosomal_S6_plastid/chlpt"/>
</dbReference>
<dbReference type="InterPro" id="IPR014717">
    <property type="entry name" value="Transl_elong_EF1B/ribsomal_bS6"/>
</dbReference>
<dbReference type="NCBIfam" id="TIGR00166">
    <property type="entry name" value="S6"/>
    <property type="match status" value="1"/>
</dbReference>
<dbReference type="PANTHER" id="PTHR21011">
    <property type="entry name" value="MITOCHONDRIAL 28S RIBOSOMAL PROTEIN S6"/>
    <property type="match status" value="1"/>
</dbReference>
<dbReference type="PANTHER" id="PTHR21011:SF1">
    <property type="entry name" value="SMALL RIBOSOMAL SUBUNIT PROTEIN BS6M"/>
    <property type="match status" value="1"/>
</dbReference>
<dbReference type="Pfam" id="PF01250">
    <property type="entry name" value="Ribosomal_S6"/>
    <property type="match status" value="1"/>
</dbReference>
<dbReference type="SUPFAM" id="SSF54995">
    <property type="entry name" value="Ribosomal protein S6"/>
    <property type="match status" value="1"/>
</dbReference>
<dbReference type="PROSITE" id="PS01048">
    <property type="entry name" value="RIBOSOMAL_S6"/>
    <property type="match status" value="1"/>
</dbReference>
<evidence type="ECO:0000255" key="1">
    <source>
        <dbReference type="HAMAP-Rule" id="MF_00360"/>
    </source>
</evidence>
<evidence type="ECO:0000256" key="2">
    <source>
        <dbReference type="SAM" id="MobiDB-lite"/>
    </source>
</evidence>
<evidence type="ECO:0000305" key="3"/>
<comment type="function">
    <text evidence="1">Binds together with bS18 to 16S ribosomal RNA.</text>
</comment>
<comment type="similarity">
    <text evidence="1">Belongs to the bacterial ribosomal protein bS6 family.</text>
</comment>
<keyword id="KW-1185">Reference proteome</keyword>
<keyword id="KW-0687">Ribonucleoprotein</keyword>
<keyword id="KW-0689">Ribosomal protein</keyword>
<keyword id="KW-0694">RNA-binding</keyword>
<keyword id="KW-0699">rRNA-binding</keyword>
<feature type="chain" id="PRO_1000005261" description="Small ribosomal subunit protein bS6">
    <location>
        <begin position="1"/>
        <end position="131"/>
    </location>
</feature>
<feature type="region of interest" description="Disordered" evidence="2">
    <location>
        <begin position="98"/>
        <end position="131"/>
    </location>
</feature>
<feature type="compositionally biased region" description="Basic and acidic residues" evidence="2">
    <location>
        <begin position="104"/>
        <end position="116"/>
    </location>
</feature>
<feature type="compositionally biased region" description="Acidic residues" evidence="2">
    <location>
        <begin position="120"/>
        <end position="131"/>
    </location>
</feature>
<accession>A7MM76</accession>
<sequence length="131" mass="15173">MRHYEIVFMVHPDQSEQVPGMIERYSAAITGAEGKIHRLEDWGRRQLAYPINKLHKAHYVLMNVEAPQEVIDELETTFRFNDAVIRSMVMRTKHAVTEASPMVKAKDERRERRDDFANETADDAEAGDSEE</sequence>
<name>RS6_CROS8</name>